<name>MRAZ_ACTPJ</name>
<accession>B0BRG8</accession>
<reference key="1">
    <citation type="journal article" date="2008" name="PLoS ONE">
        <title>Genome biology of Actinobacillus pleuropneumoniae JL03, an isolate of serotype 3 prevalent in China.</title>
        <authorList>
            <person name="Xu Z."/>
            <person name="Zhou Y."/>
            <person name="Li L."/>
            <person name="Zhou R."/>
            <person name="Xiao S."/>
            <person name="Wan Y."/>
            <person name="Zhang S."/>
            <person name="Wang K."/>
            <person name="Li W."/>
            <person name="Li L."/>
            <person name="Jin H."/>
            <person name="Kang M."/>
            <person name="Dalai B."/>
            <person name="Li T."/>
            <person name="Liu L."/>
            <person name="Cheng Y."/>
            <person name="Zhang L."/>
            <person name="Xu T."/>
            <person name="Zheng H."/>
            <person name="Pu S."/>
            <person name="Wang B."/>
            <person name="Gu W."/>
            <person name="Zhang X.L."/>
            <person name="Zhu G.-F."/>
            <person name="Wang S."/>
            <person name="Zhao G.-P."/>
            <person name="Chen H."/>
        </authorList>
    </citation>
    <scope>NUCLEOTIDE SEQUENCE [LARGE SCALE GENOMIC DNA]</scope>
    <source>
        <strain>JL03</strain>
    </source>
</reference>
<keyword id="KW-0963">Cytoplasm</keyword>
<keyword id="KW-0238">DNA-binding</keyword>
<keyword id="KW-0677">Repeat</keyword>
<keyword id="KW-0804">Transcription</keyword>
<keyword id="KW-0805">Transcription regulation</keyword>
<evidence type="ECO:0000255" key="1">
    <source>
        <dbReference type="HAMAP-Rule" id="MF_01008"/>
    </source>
</evidence>
<evidence type="ECO:0000255" key="2">
    <source>
        <dbReference type="PROSITE-ProRule" id="PRU01076"/>
    </source>
</evidence>
<protein>
    <recommendedName>
        <fullName>Transcriptional regulator MraZ</fullName>
    </recommendedName>
</protein>
<sequence length="152" mass="17465">MFRGVTSISIDNKGRIAIPTRYRAELREQHEGVLVCTVDIRQPCLLLYPLHEWETVEQKLLALSNFDPMQRRIQRVMQGFATECEMDAAGRILLSPTLRQHAQLEQQIMLVGQLNKFEIWQDKQWQSQIAEDLALGGSAEMLNCEALKNLSL</sequence>
<proteinExistence type="inferred from homology"/>
<gene>
    <name evidence="1" type="primary">mraZ</name>
    <name type="ordered locus">APJL_0010</name>
</gene>
<feature type="chain" id="PRO_1000134769" description="Transcriptional regulator MraZ">
    <location>
        <begin position="1"/>
        <end position="152"/>
    </location>
</feature>
<feature type="domain" description="SpoVT-AbrB 1" evidence="2">
    <location>
        <begin position="5"/>
        <end position="52"/>
    </location>
</feature>
<feature type="domain" description="SpoVT-AbrB 2" evidence="2">
    <location>
        <begin position="81"/>
        <end position="124"/>
    </location>
</feature>
<organism>
    <name type="scientific">Actinobacillus pleuropneumoniae serotype 3 (strain JL03)</name>
    <dbReference type="NCBI Taxonomy" id="434271"/>
    <lineage>
        <taxon>Bacteria</taxon>
        <taxon>Pseudomonadati</taxon>
        <taxon>Pseudomonadota</taxon>
        <taxon>Gammaproteobacteria</taxon>
        <taxon>Pasteurellales</taxon>
        <taxon>Pasteurellaceae</taxon>
        <taxon>Actinobacillus</taxon>
    </lineage>
</organism>
<dbReference type="EMBL" id="CP000687">
    <property type="protein sequence ID" value="ABY68616.1"/>
    <property type="molecule type" value="Genomic_DNA"/>
</dbReference>
<dbReference type="RefSeq" id="WP_005595596.1">
    <property type="nucleotide sequence ID" value="NC_010278.1"/>
</dbReference>
<dbReference type="SMR" id="B0BRG8"/>
<dbReference type="GeneID" id="48598150"/>
<dbReference type="KEGG" id="apj:APJL_0010"/>
<dbReference type="HOGENOM" id="CLU_107907_2_0_6"/>
<dbReference type="Proteomes" id="UP000008547">
    <property type="component" value="Chromosome"/>
</dbReference>
<dbReference type="GO" id="GO:0005737">
    <property type="term" value="C:cytoplasm"/>
    <property type="evidence" value="ECO:0007669"/>
    <property type="project" value="UniProtKB-UniRule"/>
</dbReference>
<dbReference type="GO" id="GO:0009295">
    <property type="term" value="C:nucleoid"/>
    <property type="evidence" value="ECO:0007669"/>
    <property type="project" value="UniProtKB-SubCell"/>
</dbReference>
<dbReference type="GO" id="GO:0003700">
    <property type="term" value="F:DNA-binding transcription factor activity"/>
    <property type="evidence" value="ECO:0007669"/>
    <property type="project" value="UniProtKB-UniRule"/>
</dbReference>
<dbReference type="GO" id="GO:0000976">
    <property type="term" value="F:transcription cis-regulatory region binding"/>
    <property type="evidence" value="ECO:0007669"/>
    <property type="project" value="TreeGrafter"/>
</dbReference>
<dbReference type="GO" id="GO:2000143">
    <property type="term" value="P:negative regulation of DNA-templated transcription initiation"/>
    <property type="evidence" value="ECO:0007669"/>
    <property type="project" value="TreeGrafter"/>
</dbReference>
<dbReference type="CDD" id="cd16321">
    <property type="entry name" value="MraZ_C"/>
    <property type="match status" value="1"/>
</dbReference>
<dbReference type="CDD" id="cd16320">
    <property type="entry name" value="MraZ_N"/>
    <property type="match status" value="1"/>
</dbReference>
<dbReference type="FunFam" id="3.40.1550.20:FF:000001">
    <property type="entry name" value="Transcriptional regulator MraZ"/>
    <property type="match status" value="1"/>
</dbReference>
<dbReference type="Gene3D" id="3.40.1550.20">
    <property type="entry name" value="Transcriptional regulator MraZ domain"/>
    <property type="match status" value="1"/>
</dbReference>
<dbReference type="HAMAP" id="MF_01008">
    <property type="entry name" value="MraZ"/>
    <property type="match status" value="1"/>
</dbReference>
<dbReference type="InterPro" id="IPR003444">
    <property type="entry name" value="MraZ"/>
</dbReference>
<dbReference type="InterPro" id="IPR035644">
    <property type="entry name" value="MraZ_C"/>
</dbReference>
<dbReference type="InterPro" id="IPR020603">
    <property type="entry name" value="MraZ_dom"/>
</dbReference>
<dbReference type="InterPro" id="IPR035642">
    <property type="entry name" value="MraZ_N"/>
</dbReference>
<dbReference type="InterPro" id="IPR038619">
    <property type="entry name" value="MraZ_sf"/>
</dbReference>
<dbReference type="InterPro" id="IPR007159">
    <property type="entry name" value="SpoVT-AbrB_dom"/>
</dbReference>
<dbReference type="InterPro" id="IPR037914">
    <property type="entry name" value="SpoVT-AbrB_sf"/>
</dbReference>
<dbReference type="NCBIfam" id="TIGR00242">
    <property type="entry name" value="division/cell wall cluster transcriptional repressor MraZ"/>
    <property type="match status" value="1"/>
</dbReference>
<dbReference type="PANTHER" id="PTHR34701">
    <property type="entry name" value="TRANSCRIPTIONAL REGULATOR MRAZ"/>
    <property type="match status" value="1"/>
</dbReference>
<dbReference type="PANTHER" id="PTHR34701:SF1">
    <property type="entry name" value="TRANSCRIPTIONAL REGULATOR MRAZ"/>
    <property type="match status" value="1"/>
</dbReference>
<dbReference type="Pfam" id="PF02381">
    <property type="entry name" value="MraZ"/>
    <property type="match status" value="2"/>
</dbReference>
<dbReference type="SUPFAM" id="SSF89447">
    <property type="entry name" value="AbrB/MazE/MraZ-like"/>
    <property type="match status" value="1"/>
</dbReference>
<dbReference type="PROSITE" id="PS51740">
    <property type="entry name" value="SPOVT_ABRB"/>
    <property type="match status" value="2"/>
</dbReference>
<comment type="subunit">
    <text evidence="1">Forms oligomers.</text>
</comment>
<comment type="subcellular location">
    <subcellularLocation>
        <location evidence="1">Cytoplasm</location>
        <location evidence="1">Nucleoid</location>
    </subcellularLocation>
</comment>
<comment type="similarity">
    <text evidence="1">Belongs to the MraZ family.</text>
</comment>